<sequence>MSEQKLRIGEIRYEVFDDYDPLTEEYLGKNLANAYFIAQIKKENVVQVGNRKINYSSDVKIGFDAFGEETKEKIKEYLLAAYSLIAEGAKDDGLVEYL</sequence>
<feature type="chain" id="PRO_0000360197" description="SPbeta prophage-derived uncharacterized protein YorB">
    <location>
        <begin position="1"/>
        <end position="98"/>
    </location>
</feature>
<accession>O31911</accession>
<dbReference type="EMBL" id="AL009126">
    <property type="protein sequence ID" value="CAB13936.1"/>
    <property type="molecule type" value="Genomic_DNA"/>
</dbReference>
<dbReference type="RefSeq" id="NP_389926.1">
    <property type="nucleotide sequence ID" value="NC_000964.3"/>
</dbReference>
<dbReference type="RefSeq" id="WP_004399516.1">
    <property type="nucleotide sequence ID" value="NZ_OZ025638.1"/>
</dbReference>
<dbReference type="FunCoup" id="O31911">
    <property type="interactions" value="53"/>
</dbReference>
<dbReference type="STRING" id="224308.BSU20440"/>
<dbReference type="PaxDb" id="224308-BSU20440"/>
<dbReference type="EnsemblBacteria" id="CAB13936">
    <property type="protein sequence ID" value="CAB13936"/>
    <property type="gene ID" value="BSU_20440"/>
</dbReference>
<dbReference type="GeneID" id="939951"/>
<dbReference type="KEGG" id="bsu:BSU20440"/>
<dbReference type="PATRIC" id="fig|224308.179.peg.2234"/>
<dbReference type="InParanoid" id="O31911"/>
<dbReference type="OrthoDB" id="2899101at2"/>
<dbReference type="BioCyc" id="BSUB:BSU20440-MONOMER"/>
<dbReference type="Proteomes" id="UP000001570">
    <property type="component" value="Chromosome"/>
</dbReference>
<proteinExistence type="predicted"/>
<protein>
    <recommendedName>
        <fullName>SPbeta prophage-derived uncharacterized protein YorB</fullName>
    </recommendedName>
</protein>
<keyword id="KW-1185">Reference proteome</keyword>
<name>YORB_BACSU</name>
<gene>
    <name type="primary">yorB</name>
    <name type="ordered locus">BSU20440</name>
</gene>
<organism>
    <name type="scientific">Bacillus subtilis (strain 168)</name>
    <dbReference type="NCBI Taxonomy" id="224308"/>
    <lineage>
        <taxon>Bacteria</taxon>
        <taxon>Bacillati</taxon>
        <taxon>Bacillota</taxon>
        <taxon>Bacilli</taxon>
        <taxon>Bacillales</taxon>
        <taxon>Bacillaceae</taxon>
        <taxon>Bacillus</taxon>
    </lineage>
</organism>
<reference key="1">
    <citation type="journal article" date="1997" name="Nature">
        <title>The complete genome sequence of the Gram-positive bacterium Bacillus subtilis.</title>
        <authorList>
            <person name="Kunst F."/>
            <person name="Ogasawara N."/>
            <person name="Moszer I."/>
            <person name="Albertini A.M."/>
            <person name="Alloni G."/>
            <person name="Azevedo V."/>
            <person name="Bertero M.G."/>
            <person name="Bessieres P."/>
            <person name="Bolotin A."/>
            <person name="Borchert S."/>
            <person name="Borriss R."/>
            <person name="Boursier L."/>
            <person name="Brans A."/>
            <person name="Braun M."/>
            <person name="Brignell S.C."/>
            <person name="Bron S."/>
            <person name="Brouillet S."/>
            <person name="Bruschi C.V."/>
            <person name="Caldwell B."/>
            <person name="Capuano V."/>
            <person name="Carter N.M."/>
            <person name="Choi S.-K."/>
            <person name="Codani J.-J."/>
            <person name="Connerton I.F."/>
            <person name="Cummings N.J."/>
            <person name="Daniel R.A."/>
            <person name="Denizot F."/>
            <person name="Devine K.M."/>
            <person name="Duesterhoeft A."/>
            <person name="Ehrlich S.D."/>
            <person name="Emmerson P.T."/>
            <person name="Entian K.-D."/>
            <person name="Errington J."/>
            <person name="Fabret C."/>
            <person name="Ferrari E."/>
            <person name="Foulger D."/>
            <person name="Fritz C."/>
            <person name="Fujita M."/>
            <person name="Fujita Y."/>
            <person name="Fuma S."/>
            <person name="Galizzi A."/>
            <person name="Galleron N."/>
            <person name="Ghim S.-Y."/>
            <person name="Glaser P."/>
            <person name="Goffeau A."/>
            <person name="Golightly E.J."/>
            <person name="Grandi G."/>
            <person name="Guiseppi G."/>
            <person name="Guy B.J."/>
            <person name="Haga K."/>
            <person name="Haiech J."/>
            <person name="Harwood C.R."/>
            <person name="Henaut A."/>
            <person name="Hilbert H."/>
            <person name="Holsappel S."/>
            <person name="Hosono S."/>
            <person name="Hullo M.-F."/>
            <person name="Itaya M."/>
            <person name="Jones L.-M."/>
            <person name="Joris B."/>
            <person name="Karamata D."/>
            <person name="Kasahara Y."/>
            <person name="Klaerr-Blanchard M."/>
            <person name="Klein C."/>
            <person name="Kobayashi Y."/>
            <person name="Koetter P."/>
            <person name="Koningstein G."/>
            <person name="Krogh S."/>
            <person name="Kumano M."/>
            <person name="Kurita K."/>
            <person name="Lapidus A."/>
            <person name="Lardinois S."/>
            <person name="Lauber J."/>
            <person name="Lazarevic V."/>
            <person name="Lee S.-M."/>
            <person name="Levine A."/>
            <person name="Liu H."/>
            <person name="Masuda S."/>
            <person name="Mauel C."/>
            <person name="Medigue C."/>
            <person name="Medina N."/>
            <person name="Mellado R.P."/>
            <person name="Mizuno M."/>
            <person name="Moestl D."/>
            <person name="Nakai S."/>
            <person name="Noback M."/>
            <person name="Noone D."/>
            <person name="O'Reilly M."/>
            <person name="Ogawa K."/>
            <person name="Ogiwara A."/>
            <person name="Oudega B."/>
            <person name="Park S.-H."/>
            <person name="Parro V."/>
            <person name="Pohl T.M."/>
            <person name="Portetelle D."/>
            <person name="Porwollik S."/>
            <person name="Prescott A.M."/>
            <person name="Presecan E."/>
            <person name="Pujic P."/>
            <person name="Purnelle B."/>
            <person name="Rapoport G."/>
            <person name="Rey M."/>
            <person name="Reynolds S."/>
            <person name="Rieger M."/>
            <person name="Rivolta C."/>
            <person name="Rocha E."/>
            <person name="Roche B."/>
            <person name="Rose M."/>
            <person name="Sadaie Y."/>
            <person name="Sato T."/>
            <person name="Scanlan E."/>
            <person name="Schleich S."/>
            <person name="Schroeter R."/>
            <person name="Scoffone F."/>
            <person name="Sekiguchi J."/>
            <person name="Sekowska A."/>
            <person name="Seror S.J."/>
            <person name="Serror P."/>
            <person name="Shin B.-S."/>
            <person name="Soldo B."/>
            <person name="Sorokin A."/>
            <person name="Tacconi E."/>
            <person name="Takagi T."/>
            <person name="Takahashi H."/>
            <person name="Takemaru K."/>
            <person name="Takeuchi M."/>
            <person name="Tamakoshi A."/>
            <person name="Tanaka T."/>
            <person name="Terpstra P."/>
            <person name="Tognoni A."/>
            <person name="Tosato V."/>
            <person name="Uchiyama S."/>
            <person name="Vandenbol M."/>
            <person name="Vannier F."/>
            <person name="Vassarotti A."/>
            <person name="Viari A."/>
            <person name="Wambutt R."/>
            <person name="Wedler E."/>
            <person name="Wedler H."/>
            <person name="Weitzenegger T."/>
            <person name="Winters P."/>
            <person name="Wipat A."/>
            <person name="Yamamoto H."/>
            <person name="Yamane K."/>
            <person name="Yasumoto K."/>
            <person name="Yata K."/>
            <person name="Yoshida K."/>
            <person name="Yoshikawa H.-F."/>
            <person name="Zumstein E."/>
            <person name="Yoshikawa H."/>
            <person name="Danchin A."/>
        </authorList>
    </citation>
    <scope>NUCLEOTIDE SEQUENCE [LARGE SCALE GENOMIC DNA]</scope>
    <source>
        <strain>168</strain>
    </source>
</reference>